<proteinExistence type="evidence at protein level"/>
<accession>P0DPQ5</accession>
<sequence>MNKQRIYSIVAILLFVVGGVLIGKPFYDGYQAEKKQTENVQAVQKMDYEKHETEFVDASKIDQPDLAEVANASLDKKQVIGRISIPSVSLELPVLKSSTEKNLLSGAATVKENQVMGKGNYALAGHNMSKKGVLFSDIASLKKGDKIYLYDNENEYEYAVTGVSEVTPDKWEVVEDHGKDEITLITCVSVKDNSKRYVVAGDLVGTKAKK</sequence>
<evidence type="ECO:0000250" key="1">
    <source>
        <dbReference type="UniProtKB" id="Q2FV99"/>
    </source>
</evidence>
<evidence type="ECO:0000255" key="2"/>
<evidence type="ECO:0000269" key="3">
    <source>
    </source>
</evidence>
<evidence type="ECO:0000269" key="4">
    <source>
    </source>
</evidence>
<evidence type="ECO:0000269" key="5">
    <source>
    </source>
</evidence>
<evidence type="ECO:0000269" key="6">
    <source>
    </source>
</evidence>
<evidence type="ECO:0000303" key="7">
    <source>
    </source>
</evidence>
<evidence type="ECO:0000303" key="8">
    <source>
    </source>
</evidence>
<evidence type="ECO:0000305" key="9"/>
<evidence type="ECO:0000312" key="10">
    <source>
        <dbReference type="EMBL" id="AAT52982.1"/>
    </source>
</evidence>
<evidence type="ECO:0007744" key="11">
    <source>
        <dbReference type="PDB" id="2KW8"/>
    </source>
</evidence>
<evidence type="ECO:0007744" key="12">
    <source>
        <dbReference type="PDB" id="2RUI"/>
    </source>
</evidence>
<comment type="function">
    <text evidence="3 4">Transpeptidase that anchors surface proteins to the cell wall (PubMed:15968076). Recognizes and modifies its substrate by proteolytic cleavage of a C-terminal sorting signal. Following cleavage, a covalent intermediate is formed via a thioester bond between the sortase and its substrate, which is then transferred and covalently attached to the cell wall (PubMed:15968076). This sortase recognizes a Leu-Pro-x-Thr-Gly (LPXTG) motif, which is cleaved by the sortase between the threonine and glycine residues (PubMed:15968076). Important for growth in macrophages. May be critical in the early stages of inhalation anthrax (PubMed:16041044).</text>
</comment>
<comment type="activity regulation">
    <text evidence="3">Inhibited by thiol-reactive reagents.</text>
</comment>
<comment type="subcellular location">
    <subcellularLocation>
        <location evidence="1">Cell membrane</location>
        <topology evidence="1">Single-pass type II membrane protein</topology>
    </subcellularLocation>
</comment>
<comment type="developmental stage">
    <text evidence="3">Expressed in vegetative cells.</text>
</comment>
<comment type="domain">
    <text evidence="5 6">Contains a unique N-terminal appendage positioned within the active site and in contact with catalytically essential histidine residue (PubMed:20489200). This appendage modulates substrate access to the enzyme. It may increase the efficiency of protein display by reducing the unproductive hydrolytic cleavage of enzyme-protein covalent intermediates that form during the cell wall anchoring reaction (PubMed:26324714).</text>
</comment>
<comment type="disruption phenotype">
    <text evidence="3 4">Disruption of the gene results in dramatic attenuation of the growth of the bacteria within J774A.1 cells, a mouse macrophage-like cell line (PubMed:16041044). Disruption does not affect the development of acute anthrax disease in the A/J mouse model (PubMed:15968076).</text>
</comment>
<comment type="similarity">
    <text evidence="9">Belongs to the bacterial sortase family. Class A subfamily.</text>
</comment>
<reference key="1">
    <citation type="submission" date="2004-01" db="EMBL/GenBank/DDBJ databases">
        <title>Complete genome sequence of Bacillus anthracis Sterne.</title>
        <authorList>
            <person name="Brettin T.S."/>
            <person name="Bruce D."/>
            <person name="Challacombe J.F."/>
            <person name="Gilna P."/>
            <person name="Han C."/>
            <person name="Hill K."/>
            <person name="Hitchcock P."/>
            <person name="Jackson P."/>
            <person name="Keim P."/>
            <person name="Longmire J."/>
            <person name="Lucas S."/>
            <person name="Okinaka R."/>
            <person name="Richardson P."/>
            <person name="Rubin E."/>
            <person name="Tice H."/>
        </authorList>
    </citation>
    <scope>NUCLEOTIDE SEQUENCE [LARGE SCALE GENOMIC DNA]</scope>
    <source>
        <strain>Sterne</strain>
    </source>
</reference>
<reference key="2">
    <citation type="journal article" date="2005" name="Infect. Immun.">
        <title>Importance of srtA and srtB for growth of Bacillus anthracis in macrophages.</title>
        <authorList>
            <person name="Zink S.D."/>
            <person name="Burns D.L."/>
        </authorList>
    </citation>
    <scope>FUNCTION</scope>
    <scope>DISRUPTION PHENOTYPE</scope>
    <source>
        <strain>Sterne</strain>
    </source>
</reference>
<reference key="3">
    <citation type="journal article" date="2005" name="J. Bacteriol.">
        <title>Bacillus anthracis sortase A (SrtA) anchors LPXTG motif-containing surface proteins to the cell wall envelope.</title>
        <authorList>
            <person name="Gaspar A.H."/>
            <person name="Marraffini L.A."/>
            <person name="Glass E.M."/>
            <person name="Debord K.L."/>
            <person name="Ton-That H."/>
            <person name="Schneewind O."/>
        </authorList>
    </citation>
    <scope>FUNCTION</scope>
    <scope>ACTIVITY REGULATION</scope>
    <scope>DEVELOPMENTAL STAGE</scope>
    <scope>DISRUPTION PHENOTYPE</scope>
    <source>
        <strain>Sterne</strain>
    </source>
</reference>
<reference evidence="11" key="4">
    <citation type="journal article" date="2010" name="J. Biol. Chem.">
        <title>The sortase A enzyme that attaches proteins to the cell wall of Bacillus anthracis contains an unusual active site architecture.</title>
        <authorList>
            <person name="Weiner E.M."/>
            <person name="Robson S."/>
            <person name="Marohn M."/>
            <person name="Clubb R.T."/>
        </authorList>
    </citation>
    <scope>STRUCTURE BY NMR OF 57-201</scope>
    <scope>DOMAIN</scope>
</reference>
<reference evidence="12" key="5">
    <citation type="journal article" date="2015" name="J. Biol. Chem.">
        <title>Structure of the Bacillus anthracis sortase A enzyme bound to its sorting signal: a flexible amino-terminal appendage modulates substrate access.</title>
        <authorList>
            <person name="Chan A.H."/>
            <person name="Yi S.W."/>
            <person name="Terwilliger A.L."/>
            <person name="Maresso A.W."/>
            <person name="Jung M.E."/>
            <person name="Clubb R.T."/>
        </authorList>
    </citation>
    <scope>STRUCTURE BY NMR OF 57-201 IN COMPLEX WITH A LPXTG SORTING SIGNAL ANALOG</scope>
    <scope>DOMAIN</scope>
    <scope>MUTAGENESIS OF SER-59; ILE-61 AND CYS-187</scope>
</reference>
<dbReference type="EC" id="3.4.22.-" evidence="9"/>
<dbReference type="EMBL" id="AE017225">
    <property type="protein sequence ID" value="AAT52982.1"/>
    <property type="molecule type" value="Genomic_DNA"/>
</dbReference>
<dbReference type="RefSeq" id="WP_001041717.1">
    <property type="nucleotide sequence ID" value="NZ_WXXJ01000017.1"/>
</dbReference>
<dbReference type="RefSeq" id="YP_026931.1">
    <property type="nucleotide sequence ID" value="NC_005945.1"/>
</dbReference>
<dbReference type="PDB" id="2KW8">
    <property type="method" value="NMR"/>
    <property type="chains" value="A=57-210"/>
</dbReference>
<dbReference type="PDB" id="2RUI">
    <property type="method" value="NMR"/>
    <property type="chains" value="A=57-210"/>
</dbReference>
<dbReference type="PDBsum" id="2KW8"/>
<dbReference type="PDBsum" id="2RUI"/>
<dbReference type="SMR" id="P0DPQ5"/>
<dbReference type="STRING" id="261594.GBAA_0688"/>
<dbReference type="BindingDB" id="P0DPQ5"/>
<dbReference type="KEGG" id="bat:BAS0654"/>
<dbReference type="OrthoDB" id="1648028at2"/>
<dbReference type="GO" id="GO:0005886">
    <property type="term" value="C:plasma membrane"/>
    <property type="evidence" value="ECO:0007669"/>
    <property type="project" value="UniProtKB-SubCell"/>
</dbReference>
<dbReference type="GO" id="GO:0008234">
    <property type="term" value="F:cysteine-type peptidase activity"/>
    <property type="evidence" value="ECO:0007669"/>
    <property type="project" value="UniProtKB-KW"/>
</dbReference>
<dbReference type="GO" id="GO:0006508">
    <property type="term" value="P:proteolysis"/>
    <property type="evidence" value="ECO:0007669"/>
    <property type="project" value="UniProtKB-KW"/>
</dbReference>
<dbReference type="CDD" id="cd06165">
    <property type="entry name" value="Sortase_A"/>
    <property type="match status" value="1"/>
</dbReference>
<dbReference type="Gene3D" id="2.40.260.10">
    <property type="entry name" value="Sortase"/>
    <property type="match status" value="1"/>
</dbReference>
<dbReference type="InterPro" id="IPR005754">
    <property type="entry name" value="Sortase"/>
</dbReference>
<dbReference type="InterPro" id="IPR042007">
    <property type="entry name" value="Sortase_A"/>
</dbReference>
<dbReference type="InterPro" id="IPR023365">
    <property type="entry name" value="Sortase_dom-sf"/>
</dbReference>
<dbReference type="NCBIfam" id="TIGR01076">
    <property type="entry name" value="sortase_fam"/>
    <property type="match status" value="1"/>
</dbReference>
<dbReference type="Pfam" id="PF04203">
    <property type="entry name" value="Sortase"/>
    <property type="match status" value="1"/>
</dbReference>
<dbReference type="SUPFAM" id="SSF63817">
    <property type="entry name" value="Sortase"/>
    <property type="match status" value="1"/>
</dbReference>
<gene>
    <name evidence="7 8" type="primary">srtA</name>
    <name evidence="10" type="ordered locus">BAS0654</name>
</gene>
<feature type="chain" id="PRO_0000445346" description="Sortase A">
    <location>
        <begin position="1"/>
        <end position="210"/>
    </location>
</feature>
<feature type="topological domain" description="Cytoplasmic" evidence="9">
    <location>
        <begin position="1"/>
        <end position="5"/>
    </location>
</feature>
<feature type="transmembrane region" description="Helical; Note=Membrane anchor" evidence="2 9">
    <location>
        <begin position="6"/>
        <end position="26"/>
    </location>
</feature>
<feature type="topological domain" description="Extracellular" evidence="9">
    <location>
        <begin position="27"/>
        <end position="210"/>
    </location>
</feature>
<feature type="active site" description="Proton donor/acceptor" evidence="1">
    <location>
        <position position="126"/>
    </location>
</feature>
<feature type="active site" description="Acyl-thioester intermediate" evidence="1">
    <location>
        <position position="187"/>
    </location>
</feature>
<feature type="site" description="Transition state stabilizer" evidence="1">
    <location>
        <position position="196"/>
    </location>
</feature>
<feature type="mutagenesis site" description="Decreases sortase-mediated cell wall protein anchoring." evidence="6">
    <original>S</original>
    <variation>G</variation>
    <location>
        <position position="59"/>
    </location>
</feature>
<feature type="mutagenesis site" description="Decreases sortase-mediated cell wall protein anchoring." evidence="6">
    <original>I</original>
    <variation>A</variation>
    <location>
        <position position="61"/>
    </location>
</feature>
<feature type="mutagenesis site" description="Loss of activity." evidence="6">
    <original>C</original>
    <variation>A</variation>
    <location>
        <position position="187"/>
    </location>
</feature>
<organism>
    <name type="scientific">Bacillus anthracis</name>
    <dbReference type="NCBI Taxonomy" id="1392"/>
    <lineage>
        <taxon>Bacteria</taxon>
        <taxon>Bacillati</taxon>
        <taxon>Bacillota</taxon>
        <taxon>Bacilli</taxon>
        <taxon>Bacillales</taxon>
        <taxon>Bacillaceae</taxon>
        <taxon>Bacillus</taxon>
        <taxon>Bacillus cereus group</taxon>
    </lineage>
</organism>
<name>SRTA_BACAN</name>
<protein>
    <recommendedName>
        <fullName evidence="9">Sortase A</fullName>
        <ecNumber evidence="9">3.4.22.-</ecNumber>
    </recommendedName>
</protein>
<keyword id="KW-0002">3D-structure</keyword>
<keyword id="KW-1003">Cell membrane</keyword>
<keyword id="KW-0378">Hydrolase</keyword>
<keyword id="KW-0472">Membrane</keyword>
<keyword id="KW-0645">Protease</keyword>
<keyword id="KW-0788">Thiol protease</keyword>
<keyword id="KW-0812">Transmembrane</keyword>
<keyword id="KW-1133">Transmembrane helix</keyword>